<keyword id="KW-0963">Cytoplasm</keyword>
<keyword id="KW-0251">Elongation factor</keyword>
<keyword id="KW-0342">GTP-binding</keyword>
<keyword id="KW-0378">Hydrolase</keyword>
<keyword id="KW-0460">Magnesium</keyword>
<keyword id="KW-0479">Metal-binding</keyword>
<keyword id="KW-0547">Nucleotide-binding</keyword>
<keyword id="KW-0648">Protein biosynthesis</keyword>
<proteinExistence type="inferred from homology"/>
<reference key="1">
    <citation type="journal article" date="2005" name="J. Bacteriol.">
        <title>Swine and poultry pathogens: the complete genome sequences of two strains of Mycoplasma hyopneumoniae and a strain of Mycoplasma synoviae.</title>
        <authorList>
            <person name="Vasconcelos A.T.R."/>
            <person name="Ferreira H.B."/>
            <person name="Bizarro C.V."/>
            <person name="Bonatto S.L."/>
            <person name="Carvalho M.O."/>
            <person name="Pinto P.M."/>
            <person name="Almeida D.F."/>
            <person name="Almeida L.G.P."/>
            <person name="Almeida R."/>
            <person name="Alves-Junior L."/>
            <person name="Assuncao E.N."/>
            <person name="Azevedo V.A.C."/>
            <person name="Bogo M.R."/>
            <person name="Brigido M.M."/>
            <person name="Brocchi M."/>
            <person name="Burity H.A."/>
            <person name="Camargo A.A."/>
            <person name="Camargo S.S."/>
            <person name="Carepo M.S."/>
            <person name="Carraro D.M."/>
            <person name="de Mattos Cascardo J.C."/>
            <person name="Castro L.A."/>
            <person name="Cavalcanti G."/>
            <person name="Chemale G."/>
            <person name="Collevatti R.G."/>
            <person name="Cunha C.W."/>
            <person name="Dallagiovanna B."/>
            <person name="Dambros B.P."/>
            <person name="Dellagostin O.A."/>
            <person name="Falcao C."/>
            <person name="Fantinatti-Garboggini F."/>
            <person name="Felipe M.S.S."/>
            <person name="Fiorentin L."/>
            <person name="Franco G.R."/>
            <person name="Freitas N.S.A."/>
            <person name="Frias D."/>
            <person name="Grangeiro T.B."/>
            <person name="Grisard E.C."/>
            <person name="Guimaraes C.T."/>
            <person name="Hungria M."/>
            <person name="Jardim S.N."/>
            <person name="Krieger M.A."/>
            <person name="Laurino J.P."/>
            <person name="Lima L.F.A."/>
            <person name="Lopes M.I."/>
            <person name="Loreto E.L.S."/>
            <person name="Madeira H.M.F."/>
            <person name="Manfio G.P."/>
            <person name="Maranhao A.Q."/>
            <person name="Martinkovics C.T."/>
            <person name="Medeiros S.R.B."/>
            <person name="Moreira M.A.M."/>
            <person name="Neiva M."/>
            <person name="Ramalho-Neto C.E."/>
            <person name="Nicolas M.F."/>
            <person name="Oliveira S.C."/>
            <person name="Paixao R.F.C."/>
            <person name="Pedrosa F.O."/>
            <person name="Pena S.D.J."/>
            <person name="Pereira M."/>
            <person name="Pereira-Ferrari L."/>
            <person name="Piffer I."/>
            <person name="Pinto L.S."/>
            <person name="Potrich D.P."/>
            <person name="Salim A.C.M."/>
            <person name="Santos F.R."/>
            <person name="Schmitt R."/>
            <person name="Schneider M.P.C."/>
            <person name="Schrank A."/>
            <person name="Schrank I.S."/>
            <person name="Schuck A.F."/>
            <person name="Seuanez H.N."/>
            <person name="Silva D.W."/>
            <person name="Silva R."/>
            <person name="Silva S.C."/>
            <person name="Soares C.M.A."/>
            <person name="Souza K.R.L."/>
            <person name="Souza R.C."/>
            <person name="Staats C.C."/>
            <person name="Steffens M.B.R."/>
            <person name="Teixeira S.M.R."/>
            <person name="Urmenyi T.P."/>
            <person name="Vainstein M.H."/>
            <person name="Zuccherato L.W."/>
            <person name="Simpson A.J.G."/>
            <person name="Zaha A."/>
        </authorList>
    </citation>
    <scope>NUCLEOTIDE SEQUENCE [LARGE SCALE GENOMIC DNA]</scope>
    <source>
        <strain>J / ATCC 25934 / NCTC 10110</strain>
    </source>
</reference>
<feature type="chain" id="PRO_0000337437" description="Elongation factor Tu">
    <location>
        <begin position="1"/>
        <end position="402"/>
    </location>
</feature>
<feature type="domain" description="tr-type G">
    <location>
        <begin position="16"/>
        <end position="211"/>
    </location>
</feature>
<feature type="region of interest" description="G1" evidence="1">
    <location>
        <begin position="25"/>
        <end position="32"/>
    </location>
</feature>
<feature type="region of interest" description="G2" evidence="1">
    <location>
        <begin position="66"/>
        <end position="70"/>
    </location>
</feature>
<feature type="region of interest" description="G3" evidence="1">
    <location>
        <begin position="87"/>
        <end position="90"/>
    </location>
</feature>
<feature type="region of interest" description="G4" evidence="1">
    <location>
        <begin position="142"/>
        <end position="145"/>
    </location>
</feature>
<feature type="region of interest" description="G5" evidence="1">
    <location>
        <begin position="181"/>
        <end position="183"/>
    </location>
</feature>
<feature type="binding site" evidence="2">
    <location>
        <begin position="25"/>
        <end position="32"/>
    </location>
    <ligand>
        <name>GTP</name>
        <dbReference type="ChEBI" id="CHEBI:37565"/>
    </ligand>
</feature>
<feature type="binding site" evidence="2">
    <location>
        <position position="32"/>
    </location>
    <ligand>
        <name>Mg(2+)</name>
        <dbReference type="ChEBI" id="CHEBI:18420"/>
    </ligand>
</feature>
<feature type="binding site" evidence="2">
    <location>
        <begin position="87"/>
        <end position="91"/>
    </location>
    <ligand>
        <name>GTP</name>
        <dbReference type="ChEBI" id="CHEBI:37565"/>
    </ligand>
</feature>
<feature type="binding site" evidence="2">
    <location>
        <begin position="142"/>
        <end position="145"/>
    </location>
    <ligand>
        <name>GTP</name>
        <dbReference type="ChEBI" id="CHEBI:37565"/>
    </ligand>
</feature>
<name>EFTU_MESHJ</name>
<evidence type="ECO:0000250" key="1"/>
<evidence type="ECO:0000255" key="2">
    <source>
        <dbReference type="HAMAP-Rule" id="MF_00118"/>
    </source>
</evidence>
<sequence length="402" mass="44122">MAVVKTTGKKDFDRSKEHINIGTIGHVDHGKTTLTAAISTVLAKRGLAEAKDYASIDAAPEEKARGITINTAHIEYSTDKRHYAHVDCPGHADYIKNMITGAAQMDGAILVVAATDGPMPQTREHILLSKQVGVPKMVVFLNKIDLLEGEEEMVDLVEVEIRELLSSYDFDGDNTPIIRGSARGALEGKPEWEAKVLELMDAVDSYIDSPVREMDKPFLMAVEDVFTITGRGTVATGKVERGQVKLNEEVEIVGYREEPKKTVITGIEMFNKNLQTAMAGDNAGVLLRGVDRKDIERGQVIAKPKTIIPHTKFKAAIYALKKEEGGRHTPFFKNYKPQFYFRTTDVTGGIEFEPGREMVIPGDNVDLTVELIAPIAVEQGTKFSIREGGRTVGAGTVTEIIK</sequence>
<gene>
    <name evidence="2" type="primary">tuf</name>
    <name type="synonym">tufA</name>
    <name type="ordered locus">MHJ_0524</name>
</gene>
<organism>
    <name type="scientific">Mesomycoplasma hyopneumoniae (strain J / ATCC 25934 / NCTC 10110)</name>
    <name type="common">Mycoplasma hyopneumoniae</name>
    <dbReference type="NCBI Taxonomy" id="262719"/>
    <lineage>
        <taxon>Bacteria</taxon>
        <taxon>Bacillati</taxon>
        <taxon>Mycoplasmatota</taxon>
        <taxon>Mycoplasmoidales</taxon>
        <taxon>Metamycoplasmataceae</taxon>
        <taxon>Mesomycoplasma</taxon>
    </lineage>
</organism>
<protein>
    <recommendedName>
        <fullName evidence="2">Elongation factor Tu</fullName>
        <shortName evidence="2">EF-Tu</shortName>
        <ecNumber evidence="2">3.6.5.3</ecNumber>
    </recommendedName>
</protein>
<accession>Q4A9G1</accession>
<dbReference type="EC" id="3.6.5.3" evidence="2"/>
<dbReference type="EMBL" id="AE017243">
    <property type="protein sequence ID" value="AAZ44610.1"/>
    <property type="molecule type" value="Genomic_DNA"/>
</dbReference>
<dbReference type="RefSeq" id="WP_011284269.1">
    <property type="nucleotide sequence ID" value="NC_007295.1"/>
</dbReference>
<dbReference type="SMR" id="Q4A9G1"/>
<dbReference type="GeneID" id="41334823"/>
<dbReference type="KEGG" id="mhj:MHJ_0524"/>
<dbReference type="eggNOG" id="COG0050">
    <property type="taxonomic scope" value="Bacteria"/>
</dbReference>
<dbReference type="HOGENOM" id="CLU_007265_0_0_14"/>
<dbReference type="OrthoDB" id="9804504at2"/>
<dbReference type="Proteomes" id="UP000000548">
    <property type="component" value="Chromosome"/>
</dbReference>
<dbReference type="GO" id="GO:0005829">
    <property type="term" value="C:cytosol"/>
    <property type="evidence" value="ECO:0007669"/>
    <property type="project" value="TreeGrafter"/>
</dbReference>
<dbReference type="GO" id="GO:0005525">
    <property type="term" value="F:GTP binding"/>
    <property type="evidence" value="ECO:0007669"/>
    <property type="project" value="UniProtKB-UniRule"/>
</dbReference>
<dbReference type="GO" id="GO:0003924">
    <property type="term" value="F:GTPase activity"/>
    <property type="evidence" value="ECO:0007669"/>
    <property type="project" value="InterPro"/>
</dbReference>
<dbReference type="GO" id="GO:0003746">
    <property type="term" value="F:translation elongation factor activity"/>
    <property type="evidence" value="ECO:0007669"/>
    <property type="project" value="UniProtKB-UniRule"/>
</dbReference>
<dbReference type="CDD" id="cd01884">
    <property type="entry name" value="EF_Tu"/>
    <property type="match status" value="1"/>
</dbReference>
<dbReference type="CDD" id="cd03697">
    <property type="entry name" value="EFTU_II"/>
    <property type="match status" value="1"/>
</dbReference>
<dbReference type="CDD" id="cd03707">
    <property type="entry name" value="EFTU_III"/>
    <property type="match status" value="1"/>
</dbReference>
<dbReference type="FunFam" id="2.40.30.10:FF:000001">
    <property type="entry name" value="Elongation factor Tu"/>
    <property type="match status" value="1"/>
</dbReference>
<dbReference type="FunFam" id="3.40.50.300:FF:000003">
    <property type="entry name" value="Elongation factor Tu"/>
    <property type="match status" value="1"/>
</dbReference>
<dbReference type="Gene3D" id="3.40.50.300">
    <property type="entry name" value="P-loop containing nucleotide triphosphate hydrolases"/>
    <property type="match status" value="1"/>
</dbReference>
<dbReference type="Gene3D" id="2.40.30.10">
    <property type="entry name" value="Translation factors"/>
    <property type="match status" value="2"/>
</dbReference>
<dbReference type="HAMAP" id="MF_00118_B">
    <property type="entry name" value="EF_Tu_B"/>
    <property type="match status" value="1"/>
</dbReference>
<dbReference type="InterPro" id="IPR041709">
    <property type="entry name" value="EF-Tu_GTP-bd"/>
</dbReference>
<dbReference type="InterPro" id="IPR050055">
    <property type="entry name" value="EF-Tu_GTPase"/>
</dbReference>
<dbReference type="InterPro" id="IPR004161">
    <property type="entry name" value="EFTu-like_2"/>
</dbReference>
<dbReference type="InterPro" id="IPR033720">
    <property type="entry name" value="EFTU_2"/>
</dbReference>
<dbReference type="InterPro" id="IPR031157">
    <property type="entry name" value="G_TR_CS"/>
</dbReference>
<dbReference type="InterPro" id="IPR027417">
    <property type="entry name" value="P-loop_NTPase"/>
</dbReference>
<dbReference type="InterPro" id="IPR005225">
    <property type="entry name" value="Small_GTP-bd"/>
</dbReference>
<dbReference type="InterPro" id="IPR000795">
    <property type="entry name" value="T_Tr_GTP-bd_dom"/>
</dbReference>
<dbReference type="InterPro" id="IPR009000">
    <property type="entry name" value="Transl_B-barrel_sf"/>
</dbReference>
<dbReference type="InterPro" id="IPR009001">
    <property type="entry name" value="Transl_elong_EF1A/Init_IF2_C"/>
</dbReference>
<dbReference type="InterPro" id="IPR004541">
    <property type="entry name" value="Transl_elong_EFTu/EF1A_bac/org"/>
</dbReference>
<dbReference type="InterPro" id="IPR004160">
    <property type="entry name" value="Transl_elong_EFTu/EF1A_C"/>
</dbReference>
<dbReference type="NCBIfam" id="TIGR00485">
    <property type="entry name" value="EF-Tu"/>
    <property type="match status" value="1"/>
</dbReference>
<dbReference type="NCBIfam" id="NF000766">
    <property type="entry name" value="PRK00049.1"/>
    <property type="match status" value="1"/>
</dbReference>
<dbReference type="NCBIfam" id="NF009372">
    <property type="entry name" value="PRK12735.1"/>
    <property type="match status" value="1"/>
</dbReference>
<dbReference type="NCBIfam" id="NF009373">
    <property type="entry name" value="PRK12736.1"/>
    <property type="match status" value="1"/>
</dbReference>
<dbReference type="NCBIfam" id="TIGR00231">
    <property type="entry name" value="small_GTP"/>
    <property type="match status" value="1"/>
</dbReference>
<dbReference type="PANTHER" id="PTHR43721:SF22">
    <property type="entry name" value="ELONGATION FACTOR TU, MITOCHONDRIAL"/>
    <property type="match status" value="1"/>
</dbReference>
<dbReference type="PANTHER" id="PTHR43721">
    <property type="entry name" value="ELONGATION FACTOR TU-RELATED"/>
    <property type="match status" value="1"/>
</dbReference>
<dbReference type="Pfam" id="PF00009">
    <property type="entry name" value="GTP_EFTU"/>
    <property type="match status" value="1"/>
</dbReference>
<dbReference type="Pfam" id="PF03144">
    <property type="entry name" value="GTP_EFTU_D2"/>
    <property type="match status" value="1"/>
</dbReference>
<dbReference type="Pfam" id="PF03143">
    <property type="entry name" value="GTP_EFTU_D3"/>
    <property type="match status" value="1"/>
</dbReference>
<dbReference type="PRINTS" id="PR00315">
    <property type="entry name" value="ELONGATNFCT"/>
</dbReference>
<dbReference type="SUPFAM" id="SSF50465">
    <property type="entry name" value="EF-Tu/eEF-1alpha/eIF2-gamma C-terminal domain"/>
    <property type="match status" value="1"/>
</dbReference>
<dbReference type="SUPFAM" id="SSF52540">
    <property type="entry name" value="P-loop containing nucleoside triphosphate hydrolases"/>
    <property type="match status" value="1"/>
</dbReference>
<dbReference type="SUPFAM" id="SSF50447">
    <property type="entry name" value="Translation proteins"/>
    <property type="match status" value="1"/>
</dbReference>
<dbReference type="PROSITE" id="PS00301">
    <property type="entry name" value="G_TR_1"/>
    <property type="match status" value="1"/>
</dbReference>
<dbReference type="PROSITE" id="PS51722">
    <property type="entry name" value="G_TR_2"/>
    <property type="match status" value="1"/>
</dbReference>
<comment type="function">
    <text evidence="2">GTP hydrolase that promotes the GTP-dependent binding of aminoacyl-tRNA to the A-site of ribosomes during protein biosynthesis.</text>
</comment>
<comment type="catalytic activity">
    <reaction evidence="2">
        <text>GTP + H2O = GDP + phosphate + H(+)</text>
        <dbReference type="Rhea" id="RHEA:19669"/>
        <dbReference type="ChEBI" id="CHEBI:15377"/>
        <dbReference type="ChEBI" id="CHEBI:15378"/>
        <dbReference type="ChEBI" id="CHEBI:37565"/>
        <dbReference type="ChEBI" id="CHEBI:43474"/>
        <dbReference type="ChEBI" id="CHEBI:58189"/>
        <dbReference type="EC" id="3.6.5.3"/>
    </reaction>
    <physiologicalReaction direction="left-to-right" evidence="2">
        <dbReference type="Rhea" id="RHEA:19670"/>
    </physiologicalReaction>
</comment>
<comment type="subunit">
    <text evidence="2">Monomer.</text>
</comment>
<comment type="subcellular location">
    <subcellularLocation>
        <location evidence="2">Cytoplasm</location>
    </subcellularLocation>
</comment>
<comment type="similarity">
    <text evidence="2">Belongs to the TRAFAC class translation factor GTPase superfamily. Classic translation factor GTPase family. EF-Tu/EF-1A subfamily.</text>
</comment>